<gene>
    <name type="primary">Suz12</name>
    <name type="synonym">D11Ertd530e</name>
    <name type="synonym">Kiaa0160</name>
</gene>
<accession>Q80U70</accession>
<accession>B1AQE5</accession>
<accession>Q80Y10</accession>
<accession>Q99L07</accession>
<sequence>MAPQKHGGGGGGGSGPSAGSGGGGFGGSAAAVAAAASGGKSGGGGCGGGGSYSASSSSAAAAAAAAGAAVLPVKKPKMEHVQADHELFLQAFEKPTQIYRFLRTRNLIAPIFLHRTLTYMSHRNSRTSIKRKTFKVDDMLSKVEKMKGEQESHSLSAHLQLTFTGFFHKNDKPSQNSENEQNSVTLEVLLVKVCHKKRKDVSCPIRQVPTGKKQVPLNPDLNQTKPGNFPSLAVSSNEFEPSNSHMVKSYSLLFRVTRPGRREFNGMINGETNENIDVSEELPARRKRNREDGEKTFVAQMTVFDKNRRLQLLDGEYEVAMQEMEECPISKKRATWETILDGKRLPPFETFSQGPTLQFTLRWTGETNDKSTAPVAKPLATRNSESLHQENKPGSVKPAQTIAVKETLTTELQTRKEKDNSNESRQKLRIFYQFLYNNNTRQQTEARDDLHCPWCTLNCRKLYSLLKHLKLCHSRFIFNYVYHPKGARIDVSINECYDGSYAGNPQDIHRQPGFAFSRNGPVKRTPITHILVCRPKRTKASMSEFLESEDGEVEQQRTYSSGHNRLYFHSDTCLPLRPQEMEVDSEDEKDPEWLREKTITQIEEFSDVNEGEKEVMKLWNLHVMKHGFIADNQMNHACMLFVENYGQKIIKKNLCRNFMLHLVSMHDFNLISIMSIDKAVTKLREMQQKLEKGESATPSNEEIAEEQNGTANGFSETNSKEKALETDGVSGVPKQSKKQKL</sequence>
<organism>
    <name type="scientific">Mus musculus</name>
    <name type="common">Mouse</name>
    <dbReference type="NCBI Taxonomy" id="10090"/>
    <lineage>
        <taxon>Eukaryota</taxon>
        <taxon>Metazoa</taxon>
        <taxon>Chordata</taxon>
        <taxon>Craniata</taxon>
        <taxon>Vertebrata</taxon>
        <taxon>Euteleostomi</taxon>
        <taxon>Mammalia</taxon>
        <taxon>Eutheria</taxon>
        <taxon>Euarchontoglires</taxon>
        <taxon>Glires</taxon>
        <taxon>Rodentia</taxon>
        <taxon>Myomorpha</taxon>
        <taxon>Muroidea</taxon>
        <taxon>Muridae</taxon>
        <taxon>Murinae</taxon>
        <taxon>Mus</taxon>
        <taxon>Mus</taxon>
    </lineage>
</organism>
<dbReference type="EMBL" id="AK122213">
    <property type="protein sequence ID" value="BAC65495.1"/>
    <property type="status" value="ALT_SEQ"/>
    <property type="molecule type" value="Transcribed_RNA"/>
</dbReference>
<dbReference type="EMBL" id="AL591113">
    <property type="status" value="NOT_ANNOTATED_CDS"/>
    <property type="molecule type" value="Genomic_DNA"/>
</dbReference>
<dbReference type="EMBL" id="BC003922">
    <property type="protein sequence ID" value="AAH03922.1"/>
    <property type="molecule type" value="mRNA"/>
</dbReference>
<dbReference type="EMBL" id="BC051099">
    <property type="protein sequence ID" value="AAH51099.1"/>
    <property type="molecule type" value="mRNA"/>
</dbReference>
<dbReference type="EMBL" id="BC064461">
    <property type="protein sequence ID" value="AAH64461.1"/>
    <property type="molecule type" value="mRNA"/>
</dbReference>
<dbReference type="CCDS" id="CCDS25125.1"/>
<dbReference type="RefSeq" id="NP_001156490.1">
    <property type="nucleotide sequence ID" value="NM_001163018.1"/>
</dbReference>
<dbReference type="RefSeq" id="NP_954666.1">
    <property type="nucleotide sequence ID" value="NM_199196.2"/>
</dbReference>
<dbReference type="SMR" id="Q80U70"/>
<dbReference type="BioGRID" id="206694">
    <property type="interactions" value="29"/>
</dbReference>
<dbReference type="CORUM" id="Q80U70"/>
<dbReference type="DIP" id="DIP-56045N"/>
<dbReference type="FunCoup" id="Q80U70">
    <property type="interactions" value="4004"/>
</dbReference>
<dbReference type="IntAct" id="Q80U70">
    <property type="interactions" value="19"/>
</dbReference>
<dbReference type="MINT" id="Q80U70"/>
<dbReference type="STRING" id="10090.ENSMUSP00000017692"/>
<dbReference type="GlyGen" id="Q80U70">
    <property type="glycosylation" value="1 site"/>
</dbReference>
<dbReference type="iPTMnet" id="Q80U70"/>
<dbReference type="PhosphoSitePlus" id="Q80U70"/>
<dbReference type="jPOST" id="Q80U70"/>
<dbReference type="PaxDb" id="10090-ENSMUSP00000017692"/>
<dbReference type="PeptideAtlas" id="Q80U70"/>
<dbReference type="ProteomicsDB" id="254611"/>
<dbReference type="Pumba" id="Q80U70"/>
<dbReference type="Antibodypedia" id="27067">
    <property type="antibodies" value="375 antibodies from 38 providers"/>
</dbReference>
<dbReference type="DNASU" id="52615"/>
<dbReference type="Ensembl" id="ENSMUST00000017692.15">
    <property type="protein sequence ID" value="ENSMUSP00000017692.9"/>
    <property type="gene ID" value="ENSMUSG00000017548.16"/>
</dbReference>
<dbReference type="GeneID" id="52615"/>
<dbReference type="KEGG" id="mmu:52615"/>
<dbReference type="UCSC" id="uc007klc.1">
    <property type="organism name" value="mouse"/>
</dbReference>
<dbReference type="AGR" id="MGI:1261758"/>
<dbReference type="CTD" id="23512"/>
<dbReference type="MGI" id="MGI:1261758">
    <property type="gene designation" value="Suz12"/>
</dbReference>
<dbReference type="VEuPathDB" id="HostDB:ENSMUSG00000017548"/>
<dbReference type="eggNOG" id="KOG2350">
    <property type="taxonomic scope" value="Eukaryota"/>
</dbReference>
<dbReference type="GeneTree" id="ENSGT00390000012364"/>
<dbReference type="InParanoid" id="Q80U70"/>
<dbReference type="OMA" id="VDGMLTK"/>
<dbReference type="OrthoDB" id="166746at2759"/>
<dbReference type="PhylomeDB" id="Q80U70"/>
<dbReference type="TreeFam" id="TF323249"/>
<dbReference type="Reactome" id="R-MMU-212300">
    <property type="pathway name" value="PRC2 methylates histones and DNA"/>
</dbReference>
<dbReference type="Reactome" id="R-MMU-2559580">
    <property type="pathway name" value="Oxidative Stress Induced Senescence"/>
</dbReference>
<dbReference type="Reactome" id="R-MMU-3214841">
    <property type="pathway name" value="PKMTs methylate histone lysines"/>
</dbReference>
<dbReference type="Reactome" id="R-MMU-4551638">
    <property type="pathway name" value="SUMOylation of chromatin organization proteins"/>
</dbReference>
<dbReference type="Reactome" id="R-MMU-8953750">
    <property type="pathway name" value="Transcriptional Regulation by E2F6"/>
</dbReference>
<dbReference type="BioGRID-ORCS" id="52615">
    <property type="hits" value="15 hits in 87 CRISPR screens"/>
</dbReference>
<dbReference type="ChiTaRS" id="Suz12">
    <property type="organism name" value="mouse"/>
</dbReference>
<dbReference type="PRO" id="PR:Q80U70"/>
<dbReference type="Proteomes" id="UP000000589">
    <property type="component" value="Chromosome 11"/>
</dbReference>
<dbReference type="RNAct" id="Q80U70">
    <property type="molecule type" value="protein"/>
</dbReference>
<dbReference type="Bgee" id="ENSMUSG00000017548">
    <property type="expression patterns" value="Expressed in metanephric loop of Henle and 280 other cell types or tissues"/>
</dbReference>
<dbReference type="ExpressionAtlas" id="Q80U70">
    <property type="expression patterns" value="baseline and differential"/>
</dbReference>
<dbReference type="GO" id="GO:0005677">
    <property type="term" value="C:chromatin silencing complex"/>
    <property type="evidence" value="ECO:0000314"/>
    <property type="project" value="MGI"/>
</dbReference>
<dbReference type="GO" id="GO:0035098">
    <property type="term" value="C:ESC/E(Z) complex"/>
    <property type="evidence" value="ECO:0000314"/>
    <property type="project" value="UniProtKB"/>
</dbReference>
<dbReference type="GO" id="GO:0016604">
    <property type="term" value="C:nuclear body"/>
    <property type="evidence" value="ECO:0007669"/>
    <property type="project" value="Ensembl"/>
</dbReference>
<dbReference type="GO" id="GO:0005730">
    <property type="term" value="C:nucleolus"/>
    <property type="evidence" value="ECO:0007669"/>
    <property type="project" value="Ensembl"/>
</dbReference>
<dbReference type="GO" id="GO:0005654">
    <property type="term" value="C:nucleoplasm"/>
    <property type="evidence" value="ECO:0000304"/>
    <property type="project" value="Reactome"/>
</dbReference>
<dbReference type="GO" id="GO:0005634">
    <property type="term" value="C:nucleus"/>
    <property type="evidence" value="ECO:0000314"/>
    <property type="project" value="MGI"/>
</dbReference>
<dbReference type="GO" id="GO:0032993">
    <property type="term" value="C:protein-DNA complex"/>
    <property type="evidence" value="ECO:0000314"/>
    <property type="project" value="MGI"/>
</dbReference>
<dbReference type="GO" id="GO:1990904">
    <property type="term" value="C:ribonucleoprotein complex"/>
    <property type="evidence" value="ECO:0000353"/>
    <property type="project" value="MGI"/>
</dbReference>
<dbReference type="GO" id="GO:0001739">
    <property type="term" value="C:sex chromatin"/>
    <property type="evidence" value="ECO:0000314"/>
    <property type="project" value="MGI"/>
</dbReference>
<dbReference type="GO" id="GO:0003682">
    <property type="term" value="F:chromatin binding"/>
    <property type="evidence" value="ECO:0000314"/>
    <property type="project" value="MGI"/>
</dbReference>
<dbReference type="GO" id="GO:0031490">
    <property type="term" value="F:chromatin DNA binding"/>
    <property type="evidence" value="ECO:0000314"/>
    <property type="project" value="MGI"/>
</dbReference>
<dbReference type="GO" id="GO:0008047">
    <property type="term" value="F:enzyme activator activity"/>
    <property type="evidence" value="ECO:0000250"/>
    <property type="project" value="UniProtKB"/>
</dbReference>
<dbReference type="GO" id="GO:0062072">
    <property type="term" value="F:histone H3K9me2/3 reader activity"/>
    <property type="evidence" value="ECO:0007669"/>
    <property type="project" value="Ensembl"/>
</dbReference>
<dbReference type="GO" id="GO:0042054">
    <property type="term" value="F:histone methyltransferase activity"/>
    <property type="evidence" value="ECO:0000266"/>
    <property type="project" value="MGI"/>
</dbReference>
<dbReference type="GO" id="GO:0106222">
    <property type="term" value="F:lncRNA binding"/>
    <property type="evidence" value="ECO:0000353"/>
    <property type="project" value="MGI"/>
</dbReference>
<dbReference type="GO" id="GO:1990841">
    <property type="term" value="F:promoter-specific chromatin binding"/>
    <property type="evidence" value="ECO:0000314"/>
    <property type="project" value="MGI"/>
</dbReference>
<dbReference type="GO" id="GO:0003723">
    <property type="term" value="F:RNA binding"/>
    <property type="evidence" value="ECO:0000353"/>
    <property type="project" value="MGI"/>
</dbReference>
<dbReference type="GO" id="GO:0000978">
    <property type="term" value="F:RNA polymerase II cis-regulatory region sequence-specific DNA binding"/>
    <property type="evidence" value="ECO:0000314"/>
    <property type="project" value="MGI"/>
</dbReference>
<dbReference type="GO" id="GO:0043565">
    <property type="term" value="F:sequence-specific DNA binding"/>
    <property type="evidence" value="ECO:0000314"/>
    <property type="project" value="MGI"/>
</dbReference>
<dbReference type="GO" id="GO:0001222">
    <property type="term" value="F:transcription corepressor binding"/>
    <property type="evidence" value="ECO:0007669"/>
    <property type="project" value="Ensembl"/>
</dbReference>
<dbReference type="GO" id="GO:0008270">
    <property type="term" value="F:zinc ion binding"/>
    <property type="evidence" value="ECO:0007669"/>
    <property type="project" value="UniProtKB-KW"/>
</dbReference>
<dbReference type="GO" id="GO:0008283">
    <property type="term" value="P:cell population proliferation"/>
    <property type="evidence" value="ECO:0000315"/>
    <property type="project" value="MGI"/>
</dbReference>
<dbReference type="GO" id="GO:0006325">
    <property type="term" value="P:chromatin organization"/>
    <property type="evidence" value="ECO:0000315"/>
    <property type="project" value="MGI"/>
</dbReference>
<dbReference type="GO" id="GO:0140718">
    <property type="term" value="P:facultative heterochromatin formation"/>
    <property type="evidence" value="ECO:0000314"/>
    <property type="project" value="GO_Central"/>
</dbReference>
<dbReference type="GO" id="GO:0045596">
    <property type="term" value="P:negative regulation of cell differentiation"/>
    <property type="evidence" value="ECO:0007669"/>
    <property type="project" value="Ensembl"/>
</dbReference>
<dbReference type="GO" id="GO:0032682">
    <property type="term" value="P:negative regulation of chemokine production"/>
    <property type="evidence" value="ECO:0007669"/>
    <property type="project" value="Ensembl"/>
</dbReference>
<dbReference type="GO" id="GO:0050680">
    <property type="term" value="P:negative regulation of epithelial cell proliferation"/>
    <property type="evidence" value="ECO:0007669"/>
    <property type="project" value="Ensembl"/>
</dbReference>
<dbReference type="GO" id="GO:0000122">
    <property type="term" value="P:negative regulation of transcription by RNA polymerase II"/>
    <property type="evidence" value="ECO:0000315"/>
    <property type="project" value="MGI"/>
</dbReference>
<dbReference type="GO" id="GO:0048709">
    <property type="term" value="P:oligodendrocyte differentiation"/>
    <property type="evidence" value="ECO:0000315"/>
    <property type="project" value="MGI"/>
</dbReference>
<dbReference type="GO" id="GO:0008284">
    <property type="term" value="P:positive regulation of cell population proliferation"/>
    <property type="evidence" value="ECO:0000315"/>
    <property type="project" value="MGI"/>
</dbReference>
<dbReference type="GO" id="GO:0036211">
    <property type="term" value="P:protein modification process"/>
    <property type="evidence" value="ECO:0007669"/>
    <property type="project" value="Ensembl"/>
</dbReference>
<dbReference type="GO" id="GO:0060816">
    <property type="term" value="P:random inactivation of X chromosome"/>
    <property type="evidence" value="ECO:0000315"/>
    <property type="project" value="MGI"/>
</dbReference>
<dbReference type="GO" id="GO:0032526">
    <property type="term" value="P:response to retinoic acid"/>
    <property type="evidence" value="ECO:0007669"/>
    <property type="project" value="Ensembl"/>
</dbReference>
<dbReference type="GO" id="GO:0021510">
    <property type="term" value="P:spinal cord development"/>
    <property type="evidence" value="ECO:0007669"/>
    <property type="project" value="Ensembl"/>
</dbReference>
<dbReference type="CDD" id="cd21740">
    <property type="entry name" value="C2_II_SUZ12"/>
    <property type="match status" value="1"/>
</dbReference>
<dbReference type="CDD" id="cd21551">
    <property type="entry name" value="VEFS-box_SUZ12"/>
    <property type="match status" value="1"/>
</dbReference>
<dbReference type="CDD" id="cd21750">
    <property type="entry name" value="ZnB-Zn_SUZ12"/>
    <property type="match status" value="1"/>
</dbReference>
<dbReference type="InterPro" id="IPR019135">
    <property type="entry name" value="Polycomb_protein_VEFS-Box"/>
</dbReference>
<dbReference type="PANTHER" id="PTHR22597">
    <property type="entry name" value="POLYCOMB GROUP PROTEIN"/>
    <property type="match status" value="1"/>
</dbReference>
<dbReference type="PANTHER" id="PTHR22597:SF0">
    <property type="entry name" value="POLYCOMB PROTEIN SUZ12"/>
    <property type="match status" value="1"/>
</dbReference>
<dbReference type="Pfam" id="PF09733">
    <property type="entry name" value="VEFS-Box"/>
    <property type="match status" value="1"/>
</dbReference>
<dbReference type="Pfam" id="PF23320">
    <property type="entry name" value="Zn_SUZ12"/>
    <property type="match status" value="1"/>
</dbReference>
<dbReference type="PROSITE" id="PS00028">
    <property type="entry name" value="ZINC_FINGER_C2H2_1"/>
    <property type="match status" value="1"/>
</dbReference>
<keyword id="KW-0156">Chromatin regulator</keyword>
<keyword id="KW-0158">Chromosome</keyword>
<keyword id="KW-1017">Isopeptide bond</keyword>
<keyword id="KW-0479">Metal-binding</keyword>
<keyword id="KW-0539">Nucleus</keyword>
<keyword id="KW-0597">Phosphoprotein</keyword>
<keyword id="KW-1185">Reference proteome</keyword>
<keyword id="KW-0678">Repressor</keyword>
<keyword id="KW-0804">Transcription</keyword>
<keyword id="KW-0805">Transcription regulation</keyword>
<keyword id="KW-0832">Ubl conjugation</keyword>
<keyword id="KW-0862">Zinc</keyword>
<keyword id="KW-0863">Zinc-finger</keyword>
<proteinExistence type="evidence at protein level"/>
<protein>
    <recommendedName>
        <fullName>Polycomb protein Suz12</fullName>
    </recommendedName>
    <alternativeName>
        <fullName>Suppressor of zeste 12 protein homolog</fullName>
    </alternativeName>
</protein>
<evidence type="ECO:0000250" key="1"/>
<evidence type="ECO:0000250" key="2">
    <source>
        <dbReference type="UniProtKB" id="Q15022"/>
    </source>
</evidence>
<evidence type="ECO:0000256" key="3">
    <source>
        <dbReference type="SAM" id="MobiDB-lite"/>
    </source>
</evidence>
<evidence type="ECO:0000269" key="4">
    <source>
    </source>
</evidence>
<evidence type="ECO:0000269" key="5">
    <source>
    </source>
</evidence>
<evidence type="ECO:0000269" key="6">
    <source>
    </source>
</evidence>
<evidence type="ECO:0000269" key="7">
    <source>
    </source>
</evidence>
<evidence type="ECO:0000269" key="8">
    <source>
    </source>
</evidence>
<evidence type="ECO:0000269" key="9">
    <source>
    </source>
</evidence>
<evidence type="ECO:0000269" key="10">
    <source>
    </source>
</evidence>
<evidence type="ECO:0000269" key="11">
    <source>
    </source>
</evidence>
<evidence type="ECO:0000269" key="12">
    <source>
    </source>
</evidence>
<evidence type="ECO:0000269" key="13">
    <source>
    </source>
</evidence>
<evidence type="ECO:0000269" key="14">
    <source>
    </source>
</evidence>
<evidence type="ECO:0000305" key="15"/>
<evidence type="ECO:0007744" key="16">
    <source>
    </source>
</evidence>
<comment type="function">
    <text evidence="2 4 5 9 14">Polycomb group (PcG) protein. Component of the PRC2/EED-EZH2 complex, which methylates 'Lys-9' (H3K9me) and 'Lys-27' (H3K27me) of histone H3, leading to transcriptional repression of the affected target gene. The PRC2/EED-EZH2 complex may also serve as a recruiting platform for DNA methyltransferases, thereby linking two epigenetic repression systems (By similarity). Genes repressed by the PRC2/EED-EZH2 complex include HOXA7, HOXB6 and HOXC8.</text>
</comment>
<comment type="subunit">
    <text evidence="2 8 10 11 13 14">Component of the PRC2 complex, which consists of the core subunits EED, EZH1 or EZH2, SUZ12, and RBBP4, and various combinations of accessory subunits including AEBP2, JARID2, PHF19, MTF2 and EPOP (PubMed:19026780, PubMed:20144788). Within the complex, interacts (via C2H2 zinc finger domain) with JARID2 and EPOP; JARID2 and EPOP compete for SUZ12 binding (By similarity). Also interacts with AEBP2 and PHF19 (By similarity). Forms a monomeric PRC2.2 (class 2) complex consisting of at least SUZ12, RBBP4, AEBP2 and JARID2 (By similarity). Forms a dimeric PRC2.1 (class 1, PRC-PCL) complex consisting of at least SUZ12, RBBP4, and PHF19 or MTF2; PHF19 and MTF2 stabilize the dimeric structure which enhances PRC2 interaction with chromatin (By similarity). The minimum components required for methyltransferase activity of the PRC2/EZH2 complex are EED, EZH2 and SUZ12 (By similarity). The PRC2 complex may also interact with DNMT1, DNMT3A, DNMT3B and PHF1 via the EZH2 subunit and with SIRT1 via the SUZ12 subunit. Interacts with WDR77 (PubMed:16712789). Interacts with histone H1. Interacts with CDYL (By similarity). Interacts with BMAL1 (PubMed:23970558). Interacts with EZHIP (via C-terminal region) (By similarity). Interacts with ARMC12 (By similarity). Interacts with DDX18; this interaction inhibits the PRC2 complex (PubMed:31914400).</text>
</comment>
<comment type="interaction">
    <interactant intactId="EBI-2526494">
        <id>Q80U70</id>
    </interactant>
    <interactant intactId="EBI-16024836">
        <id>Q7TNS8</id>
        <label>Epop</label>
    </interactant>
    <organismsDiffer>false</organismsDiffer>
    <experiments>2</experiments>
</comment>
<comment type="interaction">
    <interactant intactId="EBI-2526494">
        <id>Q80U70</id>
    </interactant>
    <interactant intactId="EBI-904311">
        <id>Q61188</id>
        <label>Ezh2</label>
    </interactant>
    <organismsDiffer>false</organismsDiffer>
    <experiments>10</experiments>
</comment>
<comment type="interaction">
    <interactant intactId="EBI-2526494">
        <id>Q80U70</id>
    </interactant>
    <interactant intactId="EBI-6876582">
        <id>Q6AXH7</id>
        <label>Ezh2</label>
    </interactant>
    <organismsDiffer>false</organismsDiffer>
    <experiments>3</experiments>
</comment>
<comment type="interaction">
    <interactant intactId="EBI-2526494">
        <id>Q80U70</id>
    </interactant>
    <interactant intactId="EBI-493592">
        <id>Q62315</id>
        <label>Jarid2</label>
    </interactant>
    <organismsDiffer>false</organismsDiffer>
    <experiments>13</experiments>
</comment>
<comment type="interaction">
    <interactant intactId="EBI-2526494">
        <id>Q80U70</id>
    </interactant>
    <interactant intactId="EBI-2531441">
        <id>Q3UXZ9</id>
        <label>Kdm5a</label>
    </interactant>
    <organismsDiffer>false</organismsDiffer>
    <experiments>2</experiments>
</comment>
<comment type="subcellular location">
    <subcellularLocation>
        <location evidence="7">Nucleus</location>
    </subcellularLocation>
    <subcellularLocation>
        <location evidence="7">Chromosome</location>
    </subcellularLocation>
    <text>Localizes to the inactive X chromosome in trophoblast stem cells.</text>
</comment>
<comment type="tissue specificity">
    <text evidence="12">Expressed in embryonic stem cells.</text>
</comment>
<comment type="developmental stage">
    <text evidence="6">Expression increases in prostate during prostate tumor development.</text>
</comment>
<comment type="PTM">
    <text evidence="2">Sumoylated, probably by PIAS2.</text>
</comment>
<comment type="disruption phenotype">
    <text evidence="4 9">Mice exhibit early embryonic lethality and defects in gastrulation accompanied by reduced methylation of 'Lys-27' of histone H3.</text>
</comment>
<comment type="similarity">
    <text evidence="15">Belongs to the VEFS (VRN2-EMF2-FIS2-SU(Z)12) family.</text>
</comment>
<comment type="sequence caution" evidence="15">
    <conflict type="miscellaneous discrepancy">
        <sequence resource="EMBL-CDS" id="BAC65495"/>
    </conflict>
    <text>Unknown reasons.</text>
</comment>
<name>SUZ12_MOUSE</name>
<reference key="1">
    <citation type="journal article" date="2003" name="DNA Res.">
        <title>Prediction of the coding sequences of mouse homologues of KIAA gene: II. The complete nucleotide sequences of 400 mouse KIAA-homologous cDNAs identified by screening of terminal sequences of cDNA clones randomly sampled from size-fractionated libraries.</title>
        <authorList>
            <person name="Okazaki N."/>
            <person name="Kikuno R."/>
            <person name="Ohara R."/>
            <person name="Inamoto S."/>
            <person name="Aizawa H."/>
            <person name="Yuasa S."/>
            <person name="Nakajima D."/>
            <person name="Nagase T."/>
            <person name="Ohara O."/>
            <person name="Koga H."/>
        </authorList>
    </citation>
    <scope>NUCLEOTIDE SEQUENCE [LARGE SCALE MRNA]</scope>
    <source>
        <tissue>Brain</tissue>
    </source>
</reference>
<reference key="2">
    <citation type="journal article" date="2009" name="PLoS Biol.">
        <title>Lineage-specific biology revealed by a finished genome assembly of the mouse.</title>
        <authorList>
            <person name="Church D.M."/>
            <person name="Goodstadt L."/>
            <person name="Hillier L.W."/>
            <person name="Zody M.C."/>
            <person name="Goldstein S."/>
            <person name="She X."/>
            <person name="Bult C.J."/>
            <person name="Agarwala R."/>
            <person name="Cherry J.L."/>
            <person name="DiCuccio M."/>
            <person name="Hlavina W."/>
            <person name="Kapustin Y."/>
            <person name="Meric P."/>
            <person name="Maglott D."/>
            <person name="Birtle Z."/>
            <person name="Marques A.C."/>
            <person name="Graves T."/>
            <person name="Zhou S."/>
            <person name="Teague B."/>
            <person name="Potamousis K."/>
            <person name="Churas C."/>
            <person name="Place M."/>
            <person name="Herschleb J."/>
            <person name="Runnheim R."/>
            <person name="Forrest D."/>
            <person name="Amos-Landgraf J."/>
            <person name="Schwartz D.C."/>
            <person name="Cheng Z."/>
            <person name="Lindblad-Toh K."/>
            <person name="Eichler E.E."/>
            <person name="Ponting C.P."/>
        </authorList>
    </citation>
    <scope>NUCLEOTIDE SEQUENCE [LARGE SCALE GENOMIC DNA]</scope>
    <source>
        <strain>C57BL/6J</strain>
    </source>
</reference>
<reference key="3">
    <citation type="journal article" date="2004" name="Genome Res.">
        <title>The status, quality, and expansion of the NIH full-length cDNA project: the Mammalian Gene Collection (MGC).</title>
        <authorList>
            <consortium name="The MGC Project Team"/>
        </authorList>
    </citation>
    <scope>NUCLEOTIDE SEQUENCE [LARGE SCALE MRNA]</scope>
    <source>
        <strain>FVB/N</strain>
        <tissue>Brain</tissue>
        <tissue>Kidney</tissue>
    </source>
</reference>
<reference key="4">
    <citation type="journal article" date="2004" name="EMBO J.">
        <title>Suz12 is essential for mouse development and for EZH2 histone methyltransferase activity.</title>
        <authorList>
            <person name="Pasini D."/>
            <person name="Bracken A.P."/>
            <person name="Jensen M.R."/>
            <person name="Lazzerini Denchi E."/>
            <person name="Helin K."/>
        </authorList>
    </citation>
    <scope>FUNCTION</scope>
    <scope>DISRUPTION PHENOTYPE</scope>
</reference>
<reference key="5">
    <citation type="journal article" date="2004" name="Nat. Genet.">
        <title>Imprinting along the Kcnq1 domain on mouse chromosome 7 involves repressive histone methylation and recruitment of Polycomb group complexes.</title>
        <authorList>
            <person name="Umlauf D."/>
            <person name="Goto Y."/>
            <person name="Cao R."/>
            <person name="Cerqueira F."/>
            <person name="Wagschal A."/>
            <person name="Zhang Y."/>
            <person name="Feil R."/>
        </authorList>
    </citation>
    <scope>FUNCTION</scope>
</reference>
<reference key="6">
    <citation type="journal article" date="2005" name="Proc. Natl. Acad. Sci. U.S.A.">
        <title>Composition and histone substrates of polycomb repressive group complexes change during cellular differentiation.</title>
        <authorList>
            <person name="Kuzmichev A."/>
            <person name="Margueron R."/>
            <person name="Vaquero A."/>
            <person name="Preissner T.S."/>
            <person name="Scher M."/>
            <person name="Kirmizis A."/>
            <person name="Ouyang X."/>
            <person name="Brockdorff N."/>
            <person name="Abate-Shen C."/>
            <person name="Farnham P.J."/>
            <person name="Reinberg D."/>
        </authorList>
    </citation>
    <scope>DEVELOPMENTAL STAGE</scope>
</reference>
<reference key="7">
    <citation type="journal article" date="2006" name="Biochem. Biophys. Res. Commun.">
        <title>Association of Polycomb group SUZ12 with WD-repeat protein MEP50 that binds to histone H2A selectively in vitro.</title>
        <authorList>
            <person name="Furuno K."/>
            <person name="Masatsugu T."/>
            <person name="Sonoda M."/>
            <person name="Sasazuki T."/>
            <person name="Yamamoto K."/>
        </authorList>
    </citation>
    <scope>INTERACTION WITH WDR77</scope>
</reference>
<reference key="8">
    <citation type="journal article" date="2006" name="Nat. Cell Biol.">
        <title>The Polycomb group protein Eed protects the inactive X-chromosome from differentiation-induced reactivation.</title>
        <authorList>
            <person name="Kalantry S."/>
            <person name="Mills K.C."/>
            <person name="Yee D."/>
            <person name="Otte A.P."/>
            <person name="Panning B."/>
            <person name="Magnuson T."/>
        </authorList>
    </citation>
    <scope>SUBCELLULAR LOCATION</scope>
</reference>
<reference key="9">
    <citation type="journal article" date="2007" name="Mol. Cell. Biol.">
        <title>The polycomb group protein Suz12 is required for embryonic stem cell differentiation.</title>
        <authorList>
            <person name="Pasini D."/>
            <person name="Bracken A.P."/>
            <person name="Hansen J.B."/>
            <person name="Capillo M."/>
            <person name="Helin K."/>
        </authorList>
    </citation>
    <scope>FUNCTION</scope>
    <scope>DISRUPTION PHENOTYPE</scope>
</reference>
<reference key="10">
    <citation type="journal article" date="2008" name="Mol. Cell">
        <title>EZH1 mediates methylation on histone H3 lysine 27 and complements EZH2 in maintaining stem cell identity and executing pluripotency.</title>
        <authorList>
            <person name="Shen X."/>
            <person name="Liu Y."/>
            <person name="Hsu Y.-J."/>
            <person name="Fujiwara Y."/>
            <person name="Kim J."/>
            <person name="Mao X."/>
            <person name="Yuan G.-C."/>
            <person name="Orkin S.H."/>
        </authorList>
    </citation>
    <scope>IDENTIFICATION IN THE PRC2/EZH1 COMPLEX</scope>
</reference>
<reference key="11">
    <citation type="journal article" date="2009" name="Immunity">
        <title>The phagosomal proteome in interferon-gamma-activated macrophages.</title>
        <authorList>
            <person name="Trost M."/>
            <person name="English L."/>
            <person name="Lemieux S."/>
            <person name="Courcelles M."/>
            <person name="Desjardins M."/>
            <person name="Thibault P."/>
        </authorList>
    </citation>
    <scope>IDENTIFICATION BY MASS SPECTROMETRY [LARGE SCALE ANALYSIS]</scope>
</reference>
<reference key="12">
    <citation type="journal article" date="2010" name="Cell">
        <title>A tissue-specific atlas of mouse protein phosphorylation and expression.</title>
        <authorList>
            <person name="Huttlin E.L."/>
            <person name="Jedrychowski M.P."/>
            <person name="Elias J.E."/>
            <person name="Goswami T."/>
            <person name="Rad R."/>
            <person name="Beausoleil S.A."/>
            <person name="Villen J."/>
            <person name="Haas W."/>
            <person name="Sowa M.E."/>
            <person name="Gygi S.P."/>
        </authorList>
    </citation>
    <scope>PHOSPHORYLATION [LARGE SCALE ANALYSIS] AT SER-548 AND SER-585</scope>
    <scope>IDENTIFICATION BY MASS SPECTROMETRY [LARGE SCALE ANALYSIS]</scope>
    <source>
        <tissue>Brain</tissue>
        <tissue>Kidney</tissue>
        <tissue>Liver</tissue>
        <tissue>Lung</tissue>
        <tissue>Spleen</tissue>
        <tissue>Testis</tissue>
    </source>
</reference>
<reference key="13">
    <citation type="journal article" date="2010" name="Cell Stem Cell">
        <title>Polycomb-like 2 associates with PRC2 and regulates transcriptional networks during mouse embryonic stem cell self-renewal and differentiation.</title>
        <authorList>
            <person name="Walker E."/>
            <person name="Chang W.Y."/>
            <person name="Hunkapiller J."/>
            <person name="Cagney G."/>
            <person name="Garcha K."/>
            <person name="Torchia J."/>
            <person name="Krogan N.J."/>
            <person name="Reiter J.F."/>
            <person name="Stanford W.L."/>
        </authorList>
    </citation>
    <scope>IDENTIFICATION IN THE PRC2 COMPLEX</scope>
</reference>
<reference key="14">
    <citation type="journal article" date="2012" name="Cell Stem Cell">
        <title>Nonoverlapping functions of the Polycomb group Cbx family of proteins in embryonic stem cells.</title>
        <authorList>
            <person name="Morey L."/>
            <person name="Pascual G."/>
            <person name="Cozzuto L."/>
            <person name="Roma G."/>
            <person name="Wutz A."/>
            <person name="Benitah S.A."/>
            <person name="Di Croce L."/>
        </authorList>
    </citation>
    <scope>TISSUE SPECIFICITY</scope>
</reference>
<reference key="15">
    <citation type="journal article" date="2013" name="Science">
        <title>Circadian gene Bmal1 regulates diurnal oscillations of Ly6C(hi) inflammatory monocytes.</title>
        <authorList>
            <person name="Nguyen K.D."/>
            <person name="Fentress S.J."/>
            <person name="Qiu Y."/>
            <person name="Yun K."/>
            <person name="Cox J.S."/>
            <person name="Chawla A."/>
        </authorList>
    </citation>
    <scope>INTERACTION WITH BMAL1</scope>
</reference>
<reference key="16">
    <citation type="journal article" date="2020" name="Cell Rep.">
        <title>DEAD-Box Helicase 18 Counteracts PRC2 to Safeguard Ribosomal DNA in Pluripotency Regulation.</title>
        <authorList>
            <person name="Zhang H."/>
            <person name="Wu Z."/>
            <person name="Lu J.Y."/>
            <person name="Huang B."/>
            <person name="Zhou H."/>
            <person name="Xie W."/>
            <person name="Wang J."/>
            <person name="Shen X."/>
        </authorList>
    </citation>
    <scope>FUNCTION</scope>
    <scope>INTERACTION WITH DDX18</scope>
</reference>
<feature type="chain" id="PRO_0000047058" description="Polycomb protein Suz12">
    <location>
        <begin position="1"/>
        <end position="741"/>
    </location>
</feature>
<feature type="zinc finger region" description="C2H2-type">
    <location>
        <begin position="450"/>
        <end position="473"/>
    </location>
</feature>
<feature type="region of interest" description="Disordered" evidence="3">
    <location>
        <begin position="1"/>
        <end position="21"/>
    </location>
</feature>
<feature type="region of interest" description="Interaction with JARID2 and EPOP" evidence="2">
    <location>
        <begin position="81"/>
        <end position="108"/>
    </location>
</feature>
<feature type="region of interest" description="Interaction with AEBP2 and PHF19" evidence="2">
    <location>
        <begin position="148"/>
        <end position="365"/>
    </location>
</feature>
<feature type="region of interest" description="VEFS-box">
    <location>
        <begin position="565"/>
        <end position="641"/>
    </location>
</feature>
<feature type="region of interest" description="Disordered" evidence="3">
    <location>
        <begin position="689"/>
        <end position="741"/>
    </location>
</feature>
<feature type="compositionally biased region" description="Polar residues" evidence="3">
    <location>
        <begin position="707"/>
        <end position="717"/>
    </location>
</feature>
<feature type="modified residue" description="Phosphoserine" evidence="2">
    <location>
        <position position="20"/>
    </location>
</feature>
<feature type="modified residue" description="Phosphoserine" evidence="2">
    <location>
        <position position="543"/>
    </location>
</feature>
<feature type="modified residue" description="Phosphoserine" evidence="16">
    <location>
        <position position="548"/>
    </location>
</feature>
<feature type="modified residue" description="Phosphoserine" evidence="16">
    <location>
        <position position="585"/>
    </location>
</feature>
<feature type="cross-link" description="Glycyl lysine isopeptide (Lys-Gly) (interchain with G-Cter in SUMO)" evidence="1">
    <location>
        <position position="74"/>
    </location>
</feature>
<feature type="cross-link" description="Glycyl lysine isopeptide (Lys-Gly) (interchain with G-Cter in SUMO)" evidence="1">
    <location>
        <position position="75"/>
    </location>
</feature>
<feature type="cross-link" description="Glycyl lysine isopeptide (Lys-Gly) (interchain with G-Cter in SUMO); alternate" evidence="1">
    <location>
        <position position="77"/>
    </location>
</feature>
<feature type="cross-link" description="Glycyl lysine isopeptide (Lys-Gly) (interchain with G-Cter in SUMO2); alternate" evidence="2">
    <location>
        <position position="77"/>
    </location>
</feature>
<feature type="cross-link" description="Glycyl lysine isopeptide (Lys-Gly) (interchain with G-Cter in SUMO2)" evidence="2">
    <location>
        <position position="225"/>
    </location>
</feature>
<feature type="cross-link" description="Glycyl lysine isopeptide (Lys-Gly) (interchain with G-Cter in SUMO2)" evidence="2">
    <location>
        <position position="392"/>
    </location>
</feature>